<feature type="signal peptide" evidence="1">
    <location>
        <begin position="1"/>
        <end position="19"/>
    </location>
</feature>
<feature type="chain" id="PRO_0000302736" description="Acetylcholine receptor subunit alpha-type des-2">
    <location>
        <begin position="20"/>
        <end position="548"/>
    </location>
</feature>
<feature type="topological domain" description="Extracellular" evidence="1">
    <location>
        <begin position="21"/>
        <end position="239"/>
    </location>
</feature>
<feature type="transmembrane region" description="Helical" evidence="1">
    <location>
        <begin position="240"/>
        <end position="260"/>
    </location>
</feature>
<feature type="transmembrane region" description="Helical" evidence="1">
    <location>
        <begin position="274"/>
        <end position="294"/>
    </location>
</feature>
<feature type="transmembrane region" description="Helical" evidence="1">
    <location>
        <begin position="301"/>
        <end position="321"/>
    </location>
</feature>
<feature type="transmembrane region" description="Helical" evidence="1">
    <location>
        <begin position="517"/>
        <end position="537"/>
    </location>
</feature>
<feature type="topological domain" description="Cytoplasmic" evidence="1">
    <location>
        <begin position="538"/>
        <end position="548"/>
    </location>
</feature>
<feature type="region of interest" description="Disordered" evidence="2">
    <location>
        <begin position="422"/>
        <end position="460"/>
    </location>
</feature>
<feature type="compositionally biased region" description="Pro residues" evidence="2">
    <location>
        <begin position="439"/>
        <end position="455"/>
    </location>
</feature>
<feature type="glycosylation site" description="N-linked (GlcNAc...) asparagine" evidence="1">
    <location>
        <position position="52"/>
    </location>
</feature>
<feature type="glycosylation site" description="N-linked (GlcNAc...) asparagine" evidence="1">
    <location>
        <position position="96"/>
    </location>
</feature>
<feature type="glycosylation site" description="N-linked (GlcNAc...) asparagine" evidence="1">
    <location>
        <position position="224"/>
    </location>
</feature>
<name>ACH4_CAEEL</name>
<evidence type="ECO:0000255" key="1"/>
<evidence type="ECO:0000256" key="2">
    <source>
        <dbReference type="SAM" id="MobiDB-lite"/>
    </source>
</evidence>
<evidence type="ECO:0000269" key="3">
    <source>
    </source>
</evidence>
<evidence type="ECO:0000269" key="4">
    <source>
    </source>
</evidence>
<evidence type="ECO:0000269" key="5">
    <source>
    </source>
</evidence>
<evidence type="ECO:0000269" key="6">
    <source>
    </source>
</evidence>
<evidence type="ECO:0000305" key="7"/>
<gene>
    <name type="primary">des-2</name>
    <name type="synonym">acr-4</name>
    <name type="ORF">T26H10.1</name>
</gene>
<organism>
    <name type="scientific">Caenorhabditis elegans</name>
    <dbReference type="NCBI Taxonomy" id="6239"/>
    <lineage>
        <taxon>Eukaryota</taxon>
        <taxon>Metazoa</taxon>
        <taxon>Ecdysozoa</taxon>
        <taxon>Nematoda</taxon>
        <taxon>Chromadorea</taxon>
        <taxon>Rhabditida</taxon>
        <taxon>Rhabditina</taxon>
        <taxon>Rhabditomorpha</taxon>
        <taxon>Rhabditoidea</taxon>
        <taxon>Rhabditidae</taxon>
        <taxon>Peloderinae</taxon>
        <taxon>Caenorhabditis</taxon>
    </lineage>
</organism>
<reference key="1">
    <citation type="journal article" date="1998" name="Proc. Natl. Acad. Sci. U.S.A.">
        <title>Two functionally dependent acetylcholine subunits are encoded in a single Caenorhabditis elegans operon.</title>
        <authorList>
            <person name="Treinin M."/>
            <person name="Gillo B."/>
            <person name="Liebman L."/>
            <person name="Chalfie M."/>
        </authorList>
    </citation>
    <scope>NUCLEOTIDE SEQUENCE [MRNA]</scope>
    <scope>INTERACTION WITH DEG-3</scope>
    <scope>FUNCTION</scope>
</reference>
<reference key="2">
    <citation type="journal article" date="1998" name="Science">
        <title>Genome sequence of the nematode C. elegans: a platform for investigating biology.</title>
        <authorList>
            <consortium name="The C. elegans sequencing consortium"/>
        </authorList>
    </citation>
    <scope>NUCLEOTIDE SEQUENCE [LARGE SCALE GENOMIC DNA]</scope>
    <source>
        <strain>Bristol N2</strain>
    </source>
</reference>
<reference key="3">
    <citation type="journal article" date="2001" name="Mol. Cell. Neurosci.">
        <title>Characterization of the deg-3/des-2 receptor: a nicotinic acetylcholine receptor that mutates to cause neuronal degeneration.</title>
        <authorList>
            <person name="Yassin L."/>
            <person name="Gillo B."/>
            <person name="Kahan T."/>
            <person name="Halevi S."/>
            <person name="Eshel M."/>
            <person name="Treinin M."/>
        </authorList>
    </citation>
    <scope>SUBCELLULAR LOCATION</scope>
    <scope>FUNCTION</scope>
</reference>
<reference key="4">
    <citation type="journal article" date="2002" name="EMBO J.">
        <title>The C. elegans ric-3 gene is required for maturation of nicotinic acetylcholine receptors.</title>
        <authorList>
            <person name="Halevi S."/>
            <person name="McKay J."/>
            <person name="Palfreyman M."/>
            <person name="Yassin L."/>
            <person name="Eshel M."/>
            <person name="Jorgensen E."/>
            <person name="Treinin M."/>
        </authorList>
    </citation>
    <scope>INTERACTION WITH DEG-3 AND RIC-3</scope>
</reference>
<reference key="5">
    <citation type="journal article" date="2005" name="J. Biol. Chem.">
        <title>RIC-3 affects properties and quantity of nicotinic acetylcholine receptors via a mechanism that does not require the coiled-coil domains.</title>
        <authorList>
            <person name="Ben-Ami H.C."/>
            <person name="Yassin L."/>
            <person name="Farah H."/>
            <person name="Michaeli A."/>
            <person name="Eshel M."/>
            <person name="Treinin M."/>
        </authorList>
    </citation>
    <scope>INTERACTION WITH DEG-3 AND RIC-3</scope>
</reference>
<proteinExistence type="evidence at protein level"/>
<accession>O76554</accession>
<sequence>MLIIIQSLLLATTASLCIADTPVPTQIRLVHDLLDNYDKKAKPMWDNSKPINVSFSMDLYQILELNEPQQYILLNAWIIERWFDEFLYWNPDDYENITELRLPYDSIWLPDTTLYNSLVMKDDDTRRLLNSKLTTDTHRRAALIELLYPTIYKFSCLLDLRFFPFDVQVCTMTFSSWTYDQKGIDYFPYSDKIGTSNYLENEGWYILQTKIKRQEVKYACCPNNYTLLQLTLYLRRKPLFYLVNLIIPTSIITLIAIVGFFTTSSASGMREEKVSLGITTLLSMSILMLMVSDQMPTTSTFIPLIGWFILAMIIVISLGTVVSSVIIAIQKRGSLGERMSKRALKFAKVLAWFTCTSLPPHVEKEHMMEAFDAPTPLVEVRPLQLASVKESVRNKWVSGARRATQRGNSGLALISDKSTDPLIHLSPTAHQPDESISPSAPPVPSSSPLPPPLTPGPADDVVSVASELSSKFLTSRMRPKSQKDNTFAAMQSSIKANRQLAVAEFEWFATVVERTCFVIFVVAFLIITFGINFIGFIHWHQAGVEYGG</sequence>
<protein>
    <recommendedName>
        <fullName>Acetylcholine receptor subunit alpha-type des-2</fullName>
    </recommendedName>
</protein>
<dbReference type="EMBL" id="AF077307">
    <property type="protein sequence ID" value="AAC98095.1"/>
    <property type="molecule type" value="mRNA"/>
</dbReference>
<dbReference type="EMBL" id="Z74044">
    <property type="protein sequence ID" value="CAA98550.1"/>
    <property type="molecule type" value="Genomic_DNA"/>
</dbReference>
<dbReference type="EMBL" id="Z74039">
    <property type="protein sequence ID" value="CAA98550.1"/>
    <property type="status" value="JOINED"/>
    <property type="molecule type" value="Genomic_DNA"/>
</dbReference>
<dbReference type="PIR" id="T23270">
    <property type="entry name" value="T23270"/>
</dbReference>
<dbReference type="RefSeq" id="NP_001256320.1">
    <property type="nucleotide sequence ID" value="NM_001269391.1"/>
</dbReference>
<dbReference type="RefSeq" id="NP_001379140.1">
    <property type="nucleotide sequence ID" value="NM_001392615.1"/>
</dbReference>
<dbReference type="SMR" id="O76554"/>
<dbReference type="BioGRID" id="44600">
    <property type="interactions" value="2"/>
</dbReference>
<dbReference type="FunCoup" id="O76554">
    <property type="interactions" value="50"/>
</dbReference>
<dbReference type="IntAct" id="O76554">
    <property type="interactions" value="1"/>
</dbReference>
<dbReference type="STRING" id="6239.T26H10.1b.1"/>
<dbReference type="GlyCosmos" id="O76554">
    <property type="glycosylation" value="3 sites, No reported glycans"/>
</dbReference>
<dbReference type="iPTMnet" id="O76554"/>
<dbReference type="PaxDb" id="6239-T26H10.1b"/>
<dbReference type="EnsemblMetazoa" id="T26H10.1a.1">
    <property type="protein sequence ID" value="T26H10.1a.1"/>
    <property type="gene ID" value="WBGene00000955"/>
</dbReference>
<dbReference type="EnsemblMetazoa" id="T26H10.1a.2">
    <property type="protein sequence ID" value="T26H10.1a.2"/>
    <property type="gene ID" value="WBGene00000955"/>
</dbReference>
<dbReference type="GeneID" id="179574"/>
<dbReference type="UCSC" id="T26H10.1">
    <property type="organism name" value="c. elegans"/>
</dbReference>
<dbReference type="AGR" id="WB:WBGene00000955"/>
<dbReference type="WormBase" id="T26H10.1a">
    <property type="protein sequence ID" value="CE21208"/>
    <property type="gene ID" value="WBGene00000955"/>
    <property type="gene designation" value="des-2"/>
</dbReference>
<dbReference type="eggNOG" id="KOG3645">
    <property type="taxonomic scope" value="Eukaryota"/>
</dbReference>
<dbReference type="HOGENOM" id="CLU_018074_2_5_1"/>
<dbReference type="InParanoid" id="O76554"/>
<dbReference type="PhylomeDB" id="O76554"/>
<dbReference type="Reactome" id="R-CEL-112314">
    <property type="pathway name" value="Neurotransmitter receptors and postsynaptic signal transmission"/>
</dbReference>
<dbReference type="Reactome" id="R-CEL-629594">
    <property type="pathway name" value="Highly calcium permeable postsynaptic nicotinic acetylcholine receptors"/>
</dbReference>
<dbReference type="PRO" id="PR:O76554"/>
<dbReference type="Proteomes" id="UP000001940">
    <property type="component" value="Chromosome V"/>
</dbReference>
<dbReference type="Bgee" id="WBGene00000955">
    <property type="expression patterns" value="Expressed in larva and 3 other cell types or tissues"/>
</dbReference>
<dbReference type="ExpressionAtlas" id="O76554">
    <property type="expression patterns" value="baseline and differential"/>
</dbReference>
<dbReference type="GO" id="GO:0043005">
    <property type="term" value="C:neuron projection"/>
    <property type="evidence" value="ECO:0000318"/>
    <property type="project" value="GO_Central"/>
</dbReference>
<dbReference type="GO" id="GO:0005886">
    <property type="term" value="C:plasma membrane"/>
    <property type="evidence" value="ECO:0000314"/>
    <property type="project" value="WormBase"/>
</dbReference>
<dbReference type="GO" id="GO:0098794">
    <property type="term" value="C:postsynapse"/>
    <property type="evidence" value="ECO:0007669"/>
    <property type="project" value="GOC"/>
</dbReference>
<dbReference type="GO" id="GO:0045202">
    <property type="term" value="C:synapse"/>
    <property type="evidence" value="ECO:0000318"/>
    <property type="project" value="GO_Central"/>
</dbReference>
<dbReference type="GO" id="GO:1902495">
    <property type="term" value="C:transmembrane transporter complex"/>
    <property type="evidence" value="ECO:0000318"/>
    <property type="project" value="GO_Central"/>
</dbReference>
<dbReference type="GO" id="GO:0005231">
    <property type="term" value="F:excitatory extracellular ligand-gated monoatomic ion channel activity"/>
    <property type="evidence" value="ECO:0000318"/>
    <property type="project" value="GO_Central"/>
</dbReference>
<dbReference type="GO" id="GO:0004888">
    <property type="term" value="F:transmembrane signaling receptor activity"/>
    <property type="evidence" value="ECO:0007669"/>
    <property type="project" value="InterPro"/>
</dbReference>
<dbReference type="GO" id="GO:1904315">
    <property type="term" value="F:transmitter-gated monoatomic ion channel activity involved in regulation of postsynaptic membrane potential"/>
    <property type="evidence" value="ECO:0000318"/>
    <property type="project" value="GO_Central"/>
</dbReference>
<dbReference type="GO" id="GO:0007268">
    <property type="term" value="P:chemical synaptic transmission"/>
    <property type="evidence" value="ECO:0000318"/>
    <property type="project" value="GO_Central"/>
</dbReference>
<dbReference type="GO" id="GO:0034220">
    <property type="term" value="P:monoatomic ion transmembrane transport"/>
    <property type="evidence" value="ECO:0000318"/>
    <property type="project" value="GO_Central"/>
</dbReference>
<dbReference type="GO" id="GO:0042391">
    <property type="term" value="P:regulation of membrane potential"/>
    <property type="evidence" value="ECO:0000318"/>
    <property type="project" value="GO_Central"/>
</dbReference>
<dbReference type="CDD" id="cd18997">
    <property type="entry name" value="LGIC_ECD_nAChR"/>
    <property type="match status" value="1"/>
</dbReference>
<dbReference type="CDD" id="cd19051">
    <property type="entry name" value="LGIC_TM_cation"/>
    <property type="match status" value="1"/>
</dbReference>
<dbReference type="FunFam" id="1.20.58.390:FF:000049">
    <property type="entry name" value="AcetylCholine Receptor"/>
    <property type="match status" value="1"/>
</dbReference>
<dbReference type="FunFam" id="2.70.170.10:FF:000031">
    <property type="entry name" value="AcetylCholine Receptor"/>
    <property type="match status" value="1"/>
</dbReference>
<dbReference type="Gene3D" id="2.70.170.10">
    <property type="entry name" value="Neurotransmitter-gated ion-channel ligand-binding domain"/>
    <property type="match status" value="1"/>
</dbReference>
<dbReference type="Gene3D" id="1.20.58.390">
    <property type="entry name" value="Neurotransmitter-gated ion-channel transmembrane domain"/>
    <property type="match status" value="1"/>
</dbReference>
<dbReference type="InterPro" id="IPR006202">
    <property type="entry name" value="Neur_chan_lig-bd"/>
</dbReference>
<dbReference type="InterPro" id="IPR036734">
    <property type="entry name" value="Neur_chan_lig-bd_sf"/>
</dbReference>
<dbReference type="InterPro" id="IPR006201">
    <property type="entry name" value="Neur_channel"/>
</dbReference>
<dbReference type="InterPro" id="IPR036719">
    <property type="entry name" value="Neuro-gated_channel_TM_sf"/>
</dbReference>
<dbReference type="InterPro" id="IPR038050">
    <property type="entry name" value="Neuro_actylchol_rec"/>
</dbReference>
<dbReference type="InterPro" id="IPR006029">
    <property type="entry name" value="Neurotrans-gated_channel_TM"/>
</dbReference>
<dbReference type="InterPro" id="IPR018000">
    <property type="entry name" value="Neurotransmitter_ion_chnl_CS"/>
</dbReference>
<dbReference type="PANTHER" id="PTHR18945">
    <property type="entry name" value="NEUROTRANSMITTER GATED ION CHANNEL"/>
    <property type="match status" value="1"/>
</dbReference>
<dbReference type="Pfam" id="PF02931">
    <property type="entry name" value="Neur_chan_LBD"/>
    <property type="match status" value="1"/>
</dbReference>
<dbReference type="Pfam" id="PF02932">
    <property type="entry name" value="Neur_chan_memb"/>
    <property type="match status" value="1"/>
</dbReference>
<dbReference type="PRINTS" id="PR00252">
    <property type="entry name" value="NRIONCHANNEL"/>
</dbReference>
<dbReference type="SUPFAM" id="SSF90112">
    <property type="entry name" value="Neurotransmitter-gated ion-channel transmembrane pore"/>
    <property type="match status" value="1"/>
</dbReference>
<dbReference type="SUPFAM" id="SSF63712">
    <property type="entry name" value="Nicotinic receptor ligand binding domain-like"/>
    <property type="match status" value="1"/>
</dbReference>
<dbReference type="PROSITE" id="PS00236">
    <property type="entry name" value="NEUROTR_ION_CHANNEL"/>
    <property type="match status" value="1"/>
</dbReference>
<comment type="function">
    <text evidence="3 6">Subunit of the non-synaptic neuronal acetylcholine receptor (AChR), which may play a role in chemotaxis towards choline. After binding choline or acetylcholine, the AChR responds by an extensive change in conformation that affects all subunits and leads to opening of an ion-conducting channel across the plasma membrane.</text>
</comment>
<comment type="subunit">
    <text evidence="4 5 6">The functional receptor is a heteromer of deg-3 and des-2. Interacts with ric-3; which is required for proper receptor folding.</text>
</comment>
<comment type="subcellular location">
    <subcellularLocation>
        <location evidence="3">Cell membrane</location>
        <topology evidence="3">Multi-pass membrane protein</topology>
    </subcellularLocation>
    <text>Enriched in the sensory endings of sensory neurons.</text>
</comment>
<comment type="similarity">
    <text evidence="7">Belongs to the ligand-gated ion channel (TC 1.A.9) family. Acetylcholine receptor (TC 1.A.9.1) subfamily.</text>
</comment>
<keyword id="KW-1003">Cell membrane</keyword>
<keyword id="KW-0325">Glycoprotein</keyword>
<keyword id="KW-0407">Ion channel</keyword>
<keyword id="KW-0406">Ion transport</keyword>
<keyword id="KW-1071">Ligand-gated ion channel</keyword>
<keyword id="KW-0472">Membrane</keyword>
<keyword id="KW-0675">Receptor</keyword>
<keyword id="KW-1185">Reference proteome</keyword>
<keyword id="KW-0732">Signal</keyword>
<keyword id="KW-0812">Transmembrane</keyword>
<keyword id="KW-1133">Transmembrane helix</keyword>
<keyword id="KW-0813">Transport</keyword>